<keyword id="KW-0067">ATP-binding</keyword>
<keyword id="KW-0119">Carbohydrate metabolism</keyword>
<keyword id="KW-0418">Kinase</keyword>
<keyword id="KW-0479">Metal-binding</keyword>
<keyword id="KW-0547">Nucleotide-binding</keyword>
<keyword id="KW-0808">Transferase</keyword>
<keyword id="KW-0862">Zinc</keyword>
<evidence type="ECO:0000255" key="1">
    <source>
        <dbReference type="HAMAP-Rule" id="MF_01271"/>
    </source>
</evidence>
<accession>Q0I4A5</accession>
<gene>
    <name evidence="1" type="primary">nagK</name>
    <name type="ordered locus">HS_1041</name>
</gene>
<organism>
    <name type="scientific">Histophilus somni (strain 129Pt)</name>
    <name type="common">Haemophilus somnus</name>
    <dbReference type="NCBI Taxonomy" id="205914"/>
    <lineage>
        <taxon>Bacteria</taxon>
        <taxon>Pseudomonadati</taxon>
        <taxon>Pseudomonadota</taxon>
        <taxon>Gammaproteobacteria</taxon>
        <taxon>Pasteurellales</taxon>
        <taxon>Pasteurellaceae</taxon>
        <taxon>Histophilus</taxon>
    </lineage>
</organism>
<name>NAGK_HISS1</name>
<reference key="1">
    <citation type="journal article" date="2007" name="J. Bacteriol.">
        <title>Complete genome sequence of Haemophilus somnus (Histophilus somni) strain 129Pt and comparison to Haemophilus ducreyi 35000HP and Haemophilus influenzae Rd.</title>
        <authorList>
            <person name="Challacombe J.F."/>
            <person name="Duncan A.J."/>
            <person name="Brettin T.S."/>
            <person name="Bruce D."/>
            <person name="Chertkov O."/>
            <person name="Detter J.C."/>
            <person name="Han C.S."/>
            <person name="Misra M."/>
            <person name="Richardson P."/>
            <person name="Tapia R."/>
            <person name="Thayer N."/>
            <person name="Xie G."/>
            <person name="Inzana T.J."/>
        </authorList>
    </citation>
    <scope>NUCLEOTIDE SEQUENCE [LARGE SCALE GENOMIC DNA]</scope>
    <source>
        <strain>129Pt</strain>
    </source>
</reference>
<comment type="function">
    <text evidence="1">Catalyzes the phosphorylation of N-acetyl-D-glucosamine (GlcNAc) derived from cell-wall degradation, yielding GlcNAc-6-P.</text>
</comment>
<comment type="catalytic activity">
    <reaction evidence="1">
        <text>N-acetyl-D-glucosamine + ATP = N-acetyl-D-glucosamine 6-phosphate + ADP + H(+)</text>
        <dbReference type="Rhea" id="RHEA:17417"/>
        <dbReference type="ChEBI" id="CHEBI:15378"/>
        <dbReference type="ChEBI" id="CHEBI:30616"/>
        <dbReference type="ChEBI" id="CHEBI:57513"/>
        <dbReference type="ChEBI" id="CHEBI:456216"/>
        <dbReference type="ChEBI" id="CHEBI:506227"/>
        <dbReference type="EC" id="2.7.1.59"/>
    </reaction>
</comment>
<comment type="pathway">
    <text evidence="1">Cell wall biogenesis; peptidoglycan recycling.</text>
</comment>
<comment type="similarity">
    <text evidence="1">Belongs to the ROK (NagC/XylR) family. NagK subfamily.</text>
</comment>
<proteinExistence type="inferred from homology"/>
<protein>
    <recommendedName>
        <fullName evidence="1">N-acetyl-D-glucosamine kinase</fullName>
        <ecNumber evidence="1">2.7.1.59</ecNumber>
    </recommendedName>
    <alternativeName>
        <fullName evidence="1">GlcNAc kinase</fullName>
    </alternativeName>
</protein>
<sequence length="305" mass="33529">MYYGFDIGGTKIELAVFNEKLEKRYSERVDTPKHSYDEWLNVITHLVQKADEKFACKGTVGIGVPGFVNQETGIAEITNIRVADNKPILKDLSERLGREVRAENDANCFALSEAWDKDNQQYPVVLGLILGTGFGGGLVFNGKVHSGQSGMAGELGHLQLNYHALKLLGWDKAPIYECGCGNKACLDTYLSGRGFEMLYRDLQGKALSAKEIIRCFYDKDESAVKFVELFIELCAISIGNIITALDPHVIILGGGLSNFDYLYEALPKALPQHLMRTAKVPLIKKAKFGDSGGVRGAAALFLSRD</sequence>
<feature type="chain" id="PRO_0000270107" description="N-acetyl-D-glucosamine kinase">
    <location>
        <begin position="1"/>
        <end position="305"/>
    </location>
</feature>
<feature type="binding site" evidence="1">
    <location>
        <begin position="4"/>
        <end position="11"/>
    </location>
    <ligand>
        <name>ATP</name>
        <dbReference type="ChEBI" id="CHEBI:30616"/>
    </ligand>
</feature>
<feature type="binding site" evidence="1">
    <location>
        <begin position="133"/>
        <end position="140"/>
    </location>
    <ligand>
        <name>ATP</name>
        <dbReference type="ChEBI" id="CHEBI:30616"/>
    </ligand>
</feature>
<feature type="binding site" evidence="1">
    <location>
        <position position="157"/>
    </location>
    <ligand>
        <name>Zn(2+)</name>
        <dbReference type="ChEBI" id="CHEBI:29105"/>
    </ligand>
</feature>
<feature type="binding site" evidence="1">
    <location>
        <position position="178"/>
    </location>
    <ligand>
        <name>Zn(2+)</name>
        <dbReference type="ChEBI" id="CHEBI:29105"/>
    </ligand>
</feature>
<feature type="binding site" evidence="1">
    <location>
        <position position="180"/>
    </location>
    <ligand>
        <name>Zn(2+)</name>
        <dbReference type="ChEBI" id="CHEBI:29105"/>
    </ligand>
</feature>
<feature type="binding site" evidence="1">
    <location>
        <position position="185"/>
    </location>
    <ligand>
        <name>Zn(2+)</name>
        <dbReference type="ChEBI" id="CHEBI:29105"/>
    </ligand>
</feature>
<dbReference type="EC" id="2.7.1.59" evidence="1"/>
<dbReference type="EMBL" id="CP000436">
    <property type="protein sequence ID" value="ABI25316.1"/>
    <property type="molecule type" value="Genomic_DNA"/>
</dbReference>
<dbReference type="SMR" id="Q0I4A5"/>
<dbReference type="KEGG" id="hso:HS_1041"/>
<dbReference type="eggNOG" id="COG1940">
    <property type="taxonomic scope" value="Bacteria"/>
</dbReference>
<dbReference type="HOGENOM" id="CLU_036604_0_3_6"/>
<dbReference type="UniPathway" id="UPA00544"/>
<dbReference type="GO" id="GO:0005524">
    <property type="term" value="F:ATP binding"/>
    <property type="evidence" value="ECO:0007669"/>
    <property type="project" value="UniProtKB-UniRule"/>
</dbReference>
<dbReference type="GO" id="GO:0045127">
    <property type="term" value="F:N-acetylglucosamine kinase activity"/>
    <property type="evidence" value="ECO:0007669"/>
    <property type="project" value="UniProtKB-UniRule"/>
</dbReference>
<dbReference type="GO" id="GO:0008270">
    <property type="term" value="F:zinc ion binding"/>
    <property type="evidence" value="ECO:0007669"/>
    <property type="project" value="UniProtKB-UniRule"/>
</dbReference>
<dbReference type="GO" id="GO:0006044">
    <property type="term" value="P:N-acetylglucosamine metabolic process"/>
    <property type="evidence" value="ECO:0007669"/>
    <property type="project" value="UniProtKB-UniRule"/>
</dbReference>
<dbReference type="GO" id="GO:0009254">
    <property type="term" value="P:peptidoglycan turnover"/>
    <property type="evidence" value="ECO:0007669"/>
    <property type="project" value="UniProtKB-UniRule"/>
</dbReference>
<dbReference type="CDD" id="cd24057">
    <property type="entry name" value="ASKHA_NBD_ROK_NAGK"/>
    <property type="match status" value="1"/>
</dbReference>
<dbReference type="FunFam" id="3.30.420.40:FF:000049">
    <property type="entry name" value="N-acetyl-D-glucosamine kinase"/>
    <property type="match status" value="1"/>
</dbReference>
<dbReference type="Gene3D" id="3.30.420.40">
    <property type="match status" value="2"/>
</dbReference>
<dbReference type="HAMAP" id="MF_01271">
    <property type="entry name" value="GlcNAc_kinase"/>
    <property type="match status" value="1"/>
</dbReference>
<dbReference type="InterPro" id="IPR043129">
    <property type="entry name" value="ATPase_NBD"/>
</dbReference>
<dbReference type="InterPro" id="IPR023505">
    <property type="entry name" value="N-acetyl-D-glucosamine_kinase"/>
</dbReference>
<dbReference type="InterPro" id="IPR000600">
    <property type="entry name" value="ROK"/>
</dbReference>
<dbReference type="InterPro" id="IPR049874">
    <property type="entry name" value="ROK_cs"/>
</dbReference>
<dbReference type="NCBIfam" id="NF009835">
    <property type="entry name" value="PRK13310.1"/>
    <property type="match status" value="1"/>
</dbReference>
<dbReference type="PANTHER" id="PTHR18964:SF162">
    <property type="entry name" value="N-ACETYL-D-GLUCOSAMINE KINASE"/>
    <property type="match status" value="1"/>
</dbReference>
<dbReference type="PANTHER" id="PTHR18964">
    <property type="entry name" value="ROK (REPRESSOR, ORF, KINASE) FAMILY"/>
    <property type="match status" value="1"/>
</dbReference>
<dbReference type="Pfam" id="PF00480">
    <property type="entry name" value="ROK"/>
    <property type="match status" value="1"/>
</dbReference>
<dbReference type="SUPFAM" id="SSF53067">
    <property type="entry name" value="Actin-like ATPase domain"/>
    <property type="match status" value="1"/>
</dbReference>
<dbReference type="PROSITE" id="PS01125">
    <property type="entry name" value="ROK"/>
    <property type="match status" value="1"/>
</dbReference>